<gene>
    <name evidence="1" type="primary">dapL</name>
    <name type="ordered locus">Gmet_0213</name>
</gene>
<protein>
    <recommendedName>
        <fullName evidence="1">LL-diaminopimelate aminotransferase</fullName>
        <shortName evidence="1">DAP-AT</shortName>
        <shortName evidence="1">DAP-aminotransferase</shortName>
        <shortName evidence="1">LL-DAP-aminotransferase</shortName>
        <ecNumber evidence="1">2.6.1.83</ecNumber>
    </recommendedName>
</protein>
<organism>
    <name type="scientific">Geobacter metallireducens (strain ATCC 53774 / DSM 7210 / GS-15)</name>
    <dbReference type="NCBI Taxonomy" id="269799"/>
    <lineage>
        <taxon>Bacteria</taxon>
        <taxon>Pseudomonadati</taxon>
        <taxon>Thermodesulfobacteriota</taxon>
        <taxon>Desulfuromonadia</taxon>
        <taxon>Geobacterales</taxon>
        <taxon>Geobacteraceae</taxon>
        <taxon>Geobacter</taxon>
    </lineage>
</organism>
<comment type="function">
    <text evidence="1">Involved in the synthesis of meso-diaminopimelate (m-DAP or DL-DAP), required for both lysine and peptidoglycan biosynthesis. Catalyzes the direct conversion of tetrahydrodipicolinate to LL-diaminopimelate.</text>
</comment>
<comment type="catalytic activity">
    <reaction evidence="1">
        <text>(2S,6S)-2,6-diaminopimelate + 2-oxoglutarate = (S)-2,3,4,5-tetrahydrodipicolinate + L-glutamate + H2O + H(+)</text>
        <dbReference type="Rhea" id="RHEA:23988"/>
        <dbReference type="ChEBI" id="CHEBI:15377"/>
        <dbReference type="ChEBI" id="CHEBI:15378"/>
        <dbReference type="ChEBI" id="CHEBI:16810"/>
        <dbReference type="ChEBI" id="CHEBI:16845"/>
        <dbReference type="ChEBI" id="CHEBI:29985"/>
        <dbReference type="ChEBI" id="CHEBI:57609"/>
        <dbReference type="EC" id="2.6.1.83"/>
    </reaction>
</comment>
<comment type="cofactor">
    <cofactor evidence="1">
        <name>pyridoxal 5'-phosphate</name>
        <dbReference type="ChEBI" id="CHEBI:597326"/>
    </cofactor>
</comment>
<comment type="pathway">
    <text evidence="1">Amino-acid biosynthesis; L-lysine biosynthesis via DAP pathway; LL-2,6-diaminopimelate from (S)-tetrahydrodipicolinate (aminotransferase route): step 1/1.</text>
</comment>
<comment type="subunit">
    <text evidence="1">Homodimer.</text>
</comment>
<comment type="similarity">
    <text evidence="1">Belongs to the class-I pyridoxal-phosphate-dependent aminotransferase family. LL-diaminopimelate aminotransferase subfamily.</text>
</comment>
<name>DAPAT_GEOMG</name>
<dbReference type="EC" id="2.6.1.83" evidence="1"/>
<dbReference type="EMBL" id="CP000148">
    <property type="protein sequence ID" value="ABB30459.1"/>
    <property type="molecule type" value="Genomic_DNA"/>
</dbReference>
<dbReference type="RefSeq" id="WP_004512802.1">
    <property type="nucleotide sequence ID" value="NC_007517.1"/>
</dbReference>
<dbReference type="SMR" id="Q39Z65"/>
<dbReference type="STRING" id="269799.Gmet_0213"/>
<dbReference type="KEGG" id="gme:Gmet_0213"/>
<dbReference type="eggNOG" id="COG0436">
    <property type="taxonomic scope" value="Bacteria"/>
</dbReference>
<dbReference type="HOGENOM" id="CLU_051433_0_0_7"/>
<dbReference type="UniPathway" id="UPA00034">
    <property type="reaction ID" value="UER00466"/>
</dbReference>
<dbReference type="Proteomes" id="UP000007073">
    <property type="component" value="Chromosome"/>
</dbReference>
<dbReference type="GO" id="GO:0010285">
    <property type="term" value="F:L,L-diaminopimelate aminotransferase activity"/>
    <property type="evidence" value="ECO:0007669"/>
    <property type="project" value="UniProtKB-EC"/>
</dbReference>
<dbReference type="GO" id="GO:0030170">
    <property type="term" value="F:pyridoxal phosphate binding"/>
    <property type="evidence" value="ECO:0007669"/>
    <property type="project" value="InterPro"/>
</dbReference>
<dbReference type="GO" id="GO:0009089">
    <property type="term" value="P:lysine biosynthetic process via diaminopimelate"/>
    <property type="evidence" value="ECO:0007669"/>
    <property type="project" value="UniProtKB-UniPathway"/>
</dbReference>
<dbReference type="CDD" id="cd00609">
    <property type="entry name" value="AAT_like"/>
    <property type="match status" value="1"/>
</dbReference>
<dbReference type="FunFam" id="3.40.640.10:FF:000099">
    <property type="entry name" value="LL-diaminopimelate aminotransferase, chloroplastic"/>
    <property type="match status" value="1"/>
</dbReference>
<dbReference type="Gene3D" id="3.90.1150.10">
    <property type="entry name" value="Aspartate Aminotransferase, domain 1"/>
    <property type="match status" value="1"/>
</dbReference>
<dbReference type="Gene3D" id="3.40.640.10">
    <property type="entry name" value="Type I PLP-dependent aspartate aminotransferase-like (Major domain)"/>
    <property type="match status" value="1"/>
</dbReference>
<dbReference type="HAMAP" id="MF_01642">
    <property type="entry name" value="DapL_aminotrans_1"/>
    <property type="match status" value="1"/>
</dbReference>
<dbReference type="InterPro" id="IPR004839">
    <property type="entry name" value="Aminotransferase_I/II_large"/>
</dbReference>
<dbReference type="InterPro" id="IPR019942">
    <property type="entry name" value="DapL/ALD1"/>
</dbReference>
<dbReference type="InterPro" id="IPR015424">
    <property type="entry name" value="PyrdxlP-dep_Trfase"/>
</dbReference>
<dbReference type="InterPro" id="IPR015421">
    <property type="entry name" value="PyrdxlP-dep_Trfase_major"/>
</dbReference>
<dbReference type="InterPro" id="IPR015422">
    <property type="entry name" value="PyrdxlP-dep_Trfase_small"/>
</dbReference>
<dbReference type="NCBIfam" id="TIGR03542">
    <property type="entry name" value="DAPAT_plant"/>
    <property type="match status" value="1"/>
</dbReference>
<dbReference type="PANTHER" id="PTHR43144">
    <property type="entry name" value="AMINOTRANSFERASE"/>
    <property type="match status" value="1"/>
</dbReference>
<dbReference type="Pfam" id="PF00155">
    <property type="entry name" value="Aminotran_1_2"/>
    <property type="match status" value="1"/>
</dbReference>
<dbReference type="SUPFAM" id="SSF53383">
    <property type="entry name" value="PLP-dependent transferases"/>
    <property type="match status" value="1"/>
</dbReference>
<feature type="chain" id="PRO_0000342238" description="LL-diaminopimelate aminotransferase">
    <location>
        <begin position="1"/>
        <end position="410"/>
    </location>
</feature>
<feature type="binding site" evidence="1">
    <location>
        <position position="15"/>
    </location>
    <ligand>
        <name>substrate</name>
    </ligand>
</feature>
<feature type="binding site" evidence="1">
    <location>
        <position position="42"/>
    </location>
    <ligand>
        <name>substrate</name>
    </ligand>
</feature>
<feature type="binding site" evidence="1">
    <location>
        <position position="72"/>
    </location>
    <ligand>
        <name>pyridoxal 5'-phosphate</name>
        <dbReference type="ChEBI" id="CHEBI:597326"/>
    </ligand>
</feature>
<feature type="binding site" evidence="1">
    <location>
        <begin position="108"/>
        <end position="109"/>
    </location>
    <ligand>
        <name>pyridoxal 5'-phosphate</name>
        <dbReference type="ChEBI" id="CHEBI:597326"/>
    </ligand>
</feature>
<feature type="binding site" evidence="1">
    <location>
        <position position="109"/>
    </location>
    <ligand>
        <name>substrate</name>
    </ligand>
</feature>
<feature type="binding site" evidence="1">
    <location>
        <position position="132"/>
    </location>
    <ligand>
        <name>pyridoxal 5'-phosphate</name>
        <dbReference type="ChEBI" id="CHEBI:597326"/>
    </ligand>
</feature>
<feature type="binding site" evidence="1">
    <location>
        <position position="132"/>
    </location>
    <ligand>
        <name>substrate</name>
    </ligand>
</feature>
<feature type="binding site" evidence="1">
    <location>
        <position position="187"/>
    </location>
    <ligand>
        <name>pyridoxal 5'-phosphate</name>
        <dbReference type="ChEBI" id="CHEBI:597326"/>
    </ligand>
</feature>
<feature type="binding site" evidence="1">
    <location>
        <position position="187"/>
    </location>
    <ligand>
        <name>substrate</name>
    </ligand>
</feature>
<feature type="binding site" evidence="1">
    <location>
        <position position="218"/>
    </location>
    <ligand>
        <name>pyridoxal 5'-phosphate</name>
        <dbReference type="ChEBI" id="CHEBI:597326"/>
    </ligand>
</feature>
<feature type="binding site" evidence="1">
    <location>
        <begin position="246"/>
        <end position="248"/>
    </location>
    <ligand>
        <name>pyridoxal 5'-phosphate</name>
        <dbReference type="ChEBI" id="CHEBI:597326"/>
    </ligand>
</feature>
<feature type="binding site" evidence="1">
    <location>
        <position position="257"/>
    </location>
    <ligand>
        <name>pyridoxal 5'-phosphate</name>
        <dbReference type="ChEBI" id="CHEBI:597326"/>
    </ligand>
</feature>
<feature type="binding site" evidence="1">
    <location>
        <position position="292"/>
    </location>
    <ligand>
        <name>pyridoxal 5'-phosphate</name>
        <dbReference type="ChEBI" id="CHEBI:597326"/>
    </ligand>
</feature>
<feature type="binding site" evidence="1">
    <location>
        <position position="292"/>
    </location>
    <ligand>
        <name>substrate</name>
    </ligand>
</feature>
<feature type="binding site" evidence="1">
    <location>
        <position position="388"/>
    </location>
    <ligand>
        <name>substrate</name>
    </ligand>
</feature>
<feature type="modified residue" description="N6-(pyridoxal phosphate)lysine" evidence="1">
    <location>
        <position position="249"/>
    </location>
</feature>
<evidence type="ECO:0000255" key="1">
    <source>
        <dbReference type="HAMAP-Rule" id="MF_01642"/>
    </source>
</evidence>
<proteinExistence type="inferred from homology"/>
<accession>Q39Z65</accession>
<keyword id="KW-0032">Aminotransferase</keyword>
<keyword id="KW-0663">Pyridoxal phosphate</keyword>
<keyword id="KW-1185">Reference proteome</keyword>
<keyword id="KW-0808">Transferase</keyword>
<reference key="1">
    <citation type="journal article" date="2009" name="BMC Microbiol.">
        <title>The genome sequence of Geobacter metallireducens: features of metabolism, physiology and regulation common and dissimilar to Geobacter sulfurreducens.</title>
        <authorList>
            <person name="Aklujkar M."/>
            <person name="Krushkal J."/>
            <person name="DiBartolo G."/>
            <person name="Lapidus A."/>
            <person name="Land M.L."/>
            <person name="Lovley D.R."/>
        </authorList>
    </citation>
    <scope>NUCLEOTIDE SEQUENCE [LARGE SCALE GENOMIC DNA]</scope>
    <source>
        <strain>ATCC 53774 / DSM 7210 / GS-15</strain>
    </source>
</reference>
<sequence>MAKINDNYLKLKAGYLFPEIGRRVREFSAANPEAKVIRLGIGDVTRPLAPAIIKAFHDAVDDLATIDNFAGYGPEQGYDWLINAIIEKSYKPLGVSLKTEEMFISDGSKCDCANILDIFALDNVVAIGDPVYPVYNDTNVMIGRTGDADEKGYYKGIVYMPCTEANGFIPSLPTEKVDIIYLCFPNNPTGTVATKAELKKWVDYANANDAVIFFDAAYEAFITDPAIPHSIYEIEGAKKCAIEFRSFSKTAGFTGVRCGLVVVPEEVMGTTPTGEKYSFNKLWLRRTTTKFNGASYPVQKAAAAVYSDEGWKQNKEIIDYYMENARIIREGLAAAGLTVYGGVNAPYIWLKTPGGMSSWDFFDKLLTECNVVGTPGSGFGPSGEGFFRLSAFGHRENVIEAVERIKKNLK</sequence>